<comment type="function">
    <text evidence="1">Beta-glucosidases are one of a number of cellulolytic enzymes involved in the degradation of cellulosic biomass. Catalyzes the last step releasing glucose from the inhibitory cellobiose (By similarity).</text>
</comment>
<comment type="catalytic activity">
    <reaction>
        <text>Hydrolysis of terminal, non-reducing beta-D-glucosyl residues with release of beta-D-glucose.</text>
        <dbReference type="EC" id="3.2.1.21"/>
    </reaction>
</comment>
<comment type="pathway">
    <text>Glycan metabolism; cellulose degradation.</text>
</comment>
<comment type="subcellular location">
    <subcellularLocation>
        <location evidence="1">Secreted</location>
    </subcellularLocation>
</comment>
<comment type="similarity">
    <text evidence="4">Belongs to the glycosyl hydrolase 3 family.</text>
</comment>
<comment type="sequence caution" evidence="4">
    <conflict type="erroneous gene model prediction">
        <sequence resource="EMBL-CDS" id="EAL88721"/>
    </conflict>
</comment>
<gene>
    <name type="primary">bglF</name>
    <name type="ORF">AFUA_6G08700</name>
</gene>
<reference key="1">
    <citation type="journal article" date="2005" name="Nature">
        <title>Genomic sequence of the pathogenic and allergenic filamentous fungus Aspergillus fumigatus.</title>
        <authorList>
            <person name="Nierman W.C."/>
            <person name="Pain A."/>
            <person name="Anderson M.J."/>
            <person name="Wortman J.R."/>
            <person name="Kim H.S."/>
            <person name="Arroyo J."/>
            <person name="Berriman M."/>
            <person name="Abe K."/>
            <person name="Archer D.B."/>
            <person name="Bermejo C."/>
            <person name="Bennett J.W."/>
            <person name="Bowyer P."/>
            <person name="Chen D."/>
            <person name="Collins M."/>
            <person name="Coulsen R."/>
            <person name="Davies R."/>
            <person name="Dyer P.S."/>
            <person name="Farman M.L."/>
            <person name="Fedorova N."/>
            <person name="Fedorova N.D."/>
            <person name="Feldblyum T.V."/>
            <person name="Fischer R."/>
            <person name="Fosker N."/>
            <person name="Fraser A."/>
            <person name="Garcia J.L."/>
            <person name="Garcia M.J."/>
            <person name="Goble A."/>
            <person name="Goldman G.H."/>
            <person name="Gomi K."/>
            <person name="Griffith-Jones S."/>
            <person name="Gwilliam R."/>
            <person name="Haas B.J."/>
            <person name="Haas H."/>
            <person name="Harris D.E."/>
            <person name="Horiuchi H."/>
            <person name="Huang J."/>
            <person name="Humphray S."/>
            <person name="Jimenez J."/>
            <person name="Keller N."/>
            <person name="Khouri H."/>
            <person name="Kitamoto K."/>
            <person name="Kobayashi T."/>
            <person name="Konzack S."/>
            <person name="Kulkarni R."/>
            <person name="Kumagai T."/>
            <person name="Lafton A."/>
            <person name="Latge J.-P."/>
            <person name="Li W."/>
            <person name="Lord A."/>
            <person name="Lu C."/>
            <person name="Majoros W.H."/>
            <person name="May G.S."/>
            <person name="Miller B.L."/>
            <person name="Mohamoud Y."/>
            <person name="Molina M."/>
            <person name="Monod M."/>
            <person name="Mouyna I."/>
            <person name="Mulligan S."/>
            <person name="Murphy L.D."/>
            <person name="O'Neil S."/>
            <person name="Paulsen I."/>
            <person name="Penalva M.A."/>
            <person name="Pertea M."/>
            <person name="Price C."/>
            <person name="Pritchard B.L."/>
            <person name="Quail M.A."/>
            <person name="Rabbinowitsch E."/>
            <person name="Rawlins N."/>
            <person name="Rajandream M.A."/>
            <person name="Reichard U."/>
            <person name="Renauld H."/>
            <person name="Robson G.D."/>
            <person name="Rodriguez de Cordoba S."/>
            <person name="Rodriguez-Pena J.M."/>
            <person name="Ronning C.M."/>
            <person name="Rutter S."/>
            <person name="Salzberg S.L."/>
            <person name="Sanchez M."/>
            <person name="Sanchez-Ferrero J.C."/>
            <person name="Saunders D."/>
            <person name="Seeger K."/>
            <person name="Squares R."/>
            <person name="Squares S."/>
            <person name="Takeuchi M."/>
            <person name="Tekaia F."/>
            <person name="Turner G."/>
            <person name="Vazquez de Aldana C.R."/>
            <person name="Weidman J."/>
            <person name="White O."/>
            <person name="Woodward J.R."/>
            <person name="Yu J.-H."/>
            <person name="Fraser C.M."/>
            <person name="Galagan J.E."/>
            <person name="Asai K."/>
            <person name="Machida M."/>
            <person name="Hall N."/>
            <person name="Barrell B.G."/>
            <person name="Denning D.W."/>
        </authorList>
    </citation>
    <scope>NUCLEOTIDE SEQUENCE [LARGE SCALE GENOMIC DNA]</scope>
    <source>
        <strain>ATCC MYA-4609 / CBS 101355 / FGSC A1100 / Af293</strain>
    </source>
</reference>
<name>BGLF_ASPFU</name>
<dbReference type="EC" id="3.2.1.21"/>
<dbReference type="EMBL" id="AAHF01000006">
    <property type="protein sequence ID" value="EAL88721.1"/>
    <property type="status" value="ALT_SEQ"/>
    <property type="molecule type" value="Genomic_DNA"/>
</dbReference>
<dbReference type="RefSeq" id="XP_750759.1">
    <property type="nucleotide sequence ID" value="XM_745666.1"/>
</dbReference>
<dbReference type="SMR" id="Q4WMU3"/>
<dbReference type="STRING" id="330879.Q4WMU3"/>
<dbReference type="GlyCosmos" id="Q4WMU3">
    <property type="glycosylation" value="7 sites, No reported glycans"/>
</dbReference>
<dbReference type="GeneID" id="3508046"/>
<dbReference type="KEGG" id="afm:AFUA_6G08700"/>
<dbReference type="eggNOG" id="ENOG502QR4D">
    <property type="taxonomic scope" value="Eukaryota"/>
</dbReference>
<dbReference type="HOGENOM" id="CLU_004542_2_0_1"/>
<dbReference type="InParanoid" id="Q4WMU3"/>
<dbReference type="OrthoDB" id="416222at2759"/>
<dbReference type="UniPathway" id="UPA00696"/>
<dbReference type="Proteomes" id="UP000002530">
    <property type="component" value="Chromosome 6"/>
</dbReference>
<dbReference type="GO" id="GO:0005576">
    <property type="term" value="C:extracellular region"/>
    <property type="evidence" value="ECO:0007669"/>
    <property type="project" value="UniProtKB-SubCell"/>
</dbReference>
<dbReference type="GO" id="GO:0008422">
    <property type="term" value="F:beta-glucosidase activity"/>
    <property type="evidence" value="ECO:0000318"/>
    <property type="project" value="GO_Central"/>
</dbReference>
<dbReference type="GO" id="GO:0030245">
    <property type="term" value="P:cellulose catabolic process"/>
    <property type="evidence" value="ECO:0007669"/>
    <property type="project" value="UniProtKB-UniPathway"/>
</dbReference>
<dbReference type="GO" id="GO:0009251">
    <property type="term" value="P:glucan catabolic process"/>
    <property type="evidence" value="ECO:0000318"/>
    <property type="project" value="GO_Central"/>
</dbReference>
<dbReference type="FunFam" id="2.60.40.10:FF:001619">
    <property type="entry name" value="Beta-glucosidase"/>
    <property type="match status" value="1"/>
</dbReference>
<dbReference type="FunFam" id="3.20.20.300:FF:000002">
    <property type="entry name" value="Probable beta-glucosidase"/>
    <property type="match status" value="1"/>
</dbReference>
<dbReference type="FunFam" id="3.40.50.1700:FF:000003">
    <property type="entry name" value="Probable beta-glucosidase"/>
    <property type="match status" value="1"/>
</dbReference>
<dbReference type="Gene3D" id="3.40.50.1700">
    <property type="entry name" value="Glycoside hydrolase family 3 C-terminal domain"/>
    <property type="match status" value="1"/>
</dbReference>
<dbReference type="Gene3D" id="3.20.20.300">
    <property type="entry name" value="Glycoside hydrolase, family 3, N-terminal domain"/>
    <property type="match status" value="1"/>
</dbReference>
<dbReference type="Gene3D" id="2.60.40.10">
    <property type="entry name" value="Immunoglobulins"/>
    <property type="match status" value="1"/>
</dbReference>
<dbReference type="InterPro" id="IPR050288">
    <property type="entry name" value="Cellulose_deg_GH3"/>
</dbReference>
<dbReference type="InterPro" id="IPR026891">
    <property type="entry name" value="Fn3-like"/>
</dbReference>
<dbReference type="InterPro" id="IPR019800">
    <property type="entry name" value="Glyco_hydro_3_AS"/>
</dbReference>
<dbReference type="InterPro" id="IPR002772">
    <property type="entry name" value="Glyco_hydro_3_C"/>
</dbReference>
<dbReference type="InterPro" id="IPR036881">
    <property type="entry name" value="Glyco_hydro_3_C_sf"/>
</dbReference>
<dbReference type="InterPro" id="IPR001764">
    <property type="entry name" value="Glyco_hydro_3_N"/>
</dbReference>
<dbReference type="InterPro" id="IPR036962">
    <property type="entry name" value="Glyco_hydro_3_N_sf"/>
</dbReference>
<dbReference type="InterPro" id="IPR017853">
    <property type="entry name" value="Glycoside_hydrolase_SF"/>
</dbReference>
<dbReference type="InterPro" id="IPR013783">
    <property type="entry name" value="Ig-like_fold"/>
</dbReference>
<dbReference type="PANTHER" id="PTHR42715">
    <property type="entry name" value="BETA-GLUCOSIDASE"/>
    <property type="match status" value="1"/>
</dbReference>
<dbReference type="PANTHER" id="PTHR42715:SF2">
    <property type="entry name" value="BETA-GLUCOSIDASE F-RELATED"/>
    <property type="match status" value="1"/>
</dbReference>
<dbReference type="Pfam" id="PF14310">
    <property type="entry name" value="Fn3-like"/>
    <property type="match status" value="1"/>
</dbReference>
<dbReference type="Pfam" id="PF00933">
    <property type="entry name" value="Glyco_hydro_3"/>
    <property type="match status" value="1"/>
</dbReference>
<dbReference type="Pfam" id="PF01915">
    <property type="entry name" value="Glyco_hydro_3_C"/>
    <property type="match status" value="1"/>
</dbReference>
<dbReference type="PRINTS" id="PR00133">
    <property type="entry name" value="GLHYDRLASE3"/>
</dbReference>
<dbReference type="SMART" id="SM01217">
    <property type="entry name" value="Fn3_like"/>
    <property type="match status" value="1"/>
</dbReference>
<dbReference type="SUPFAM" id="SSF51445">
    <property type="entry name" value="(Trans)glycosidases"/>
    <property type="match status" value="1"/>
</dbReference>
<dbReference type="SUPFAM" id="SSF52279">
    <property type="entry name" value="Beta-D-glucan exohydrolase, C-terminal domain"/>
    <property type="match status" value="1"/>
</dbReference>
<dbReference type="PROSITE" id="PS00775">
    <property type="entry name" value="GLYCOSYL_HYDROL_F3"/>
    <property type="match status" value="1"/>
</dbReference>
<organism>
    <name type="scientific">Aspergillus fumigatus (strain ATCC MYA-4609 / CBS 101355 / FGSC A1100 / Af293)</name>
    <name type="common">Neosartorya fumigata</name>
    <dbReference type="NCBI Taxonomy" id="330879"/>
    <lineage>
        <taxon>Eukaryota</taxon>
        <taxon>Fungi</taxon>
        <taxon>Dikarya</taxon>
        <taxon>Ascomycota</taxon>
        <taxon>Pezizomycotina</taxon>
        <taxon>Eurotiomycetes</taxon>
        <taxon>Eurotiomycetidae</taxon>
        <taxon>Eurotiales</taxon>
        <taxon>Aspergillaceae</taxon>
        <taxon>Aspergillus</taxon>
        <taxon>Aspergillus subgen. Fumigati</taxon>
    </lineage>
</organism>
<sequence>MRVLSAIALVASLASSALSAPASESRVSTQLRSRDAEGYSSPPYYPAPNGGWLSSWADAYEKAQRVVRDMTLAEKVNLTTGTGIFMGPCVGQTGSALRFGIPNLCLQDSPLGVRNSDHNTAFPAGITVGATFDKDLMYARGVELGKEFRGKGINVLLGPSVGPIGRKPRGGRNWEGFGADPSLQAIGGAQTIKGIQSQGVIATIKHYIGNEQEMYRMSNVGQRAYSSNIDDRTLHEVYLWPFAEGIRAGVGAVMTAYNEVNSSACSQNSKLLNEILKDELGFQGFVMTDWLGQYGGVSSALAGLDMAMPGDGAIPLLGTAYWGSELSRSILNGSVPVSRLNDMVTRIVAAWYKMGQDGEFPLPNFSSNTQDATGPLYPGALFSPSGVVNQYVNVQADHNITARAIARDAITLLKNDDNILPLKKDDALKVFGTDAGPNPDGLNSCADMGCNKGVLTMGWGSGTSRLPYLVTPQEAIANISSNAAFFITDNFPSNVAVSSGDVAVVFISADSGENYITVEGNPGDRTSAGLNAWHNGDKLVKDAAAKFSKVVVVVHTVGPILMEEWIDLPSVKAVLVAHLPGQEAGWSLTDVLFGDYSPSGHLPYTIPRAESDYPSSVGLLSQPIVQIQDTYTEGLYIDYRLFLKANITPRYPFGHGLSYTTFSFSQPTLSVRTALDSTYPPTRPPKGPTPTYPTAIPDPSEVAWPKNFGRIWRYLYPYLDDPASAAKNSSKTYPYPAGYTTVPKPAPRAGGAEGGNPALFDVAFAVSVTVTNTGSRPGRAVAQLYVELPDSLGETPSRQLRQFAKTKTLAPGTSETLTMEITRKDISVWDVVVQDWKAPVRGEGVKIWLGESVLDMRAVCEVGGACRVI</sequence>
<evidence type="ECO:0000250" key="1"/>
<evidence type="ECO:0000255" key="2"/>
<evidence type="ECO:0000256" key="3">
    <source>
        <dbReference type="SAM" id="MobiDB-lite"/>
    </source>
</evidence>
<evidence type="ECO:0000305" key="4"/>
<proteinExistence type="inferred from homology"/>
<keyword id="KW-0119">Carbohydrate metabolism</keyword>
<keyword id="KW-0136">Cellulose degradation</keyword>
<keyword id="KW-0325">Glycoprotein</keyword>
<keyword id="KW-0326">Glycosidase</keyword>
<keyword id="KW-0378">Hydrolase</keyword>
<keyword id="KW-0624">Polysaccharide degradation</keyword>
<keyword id="KW-1185">Reference proteome</keyword>
<keyword id="KW-0964">Secreted</keyword>
<keyword id="KW-0732">Signal</keyword>
<feature type="signal peptide" evidence="2">
    <location>
        <begin position="1"/>
        <end position="19"/>
    </location>
</feature>
<feature type="chain" id="PRO_0000394111" description="Probable beta-glucosidase F">
    <location>
        <begin position="20"/>
        <end position="869"/>
    </location>
</feature>
<feature type="region of interest" description="Disordered" evidence="3">
    <location>
        <begin position="677"/>
        <end position="697"/>
    </location>
</feature>
<feature type="compositionally biased region" description="Pro residues" evidence="3">
    <location>
        <begin position="681"/>
        <end position="691"/>
    </location>
</feature>
<feature type="active site" evidence="1">
    <location>
        <position position="289"/>
    </location>
</feature>
<feature type="glycosylation site" description="N-linked (GlcNAc...) asparagine" evidence="2">
    <location>
        <position position="77"/>
    </location>
</feature>
<feature type="glycosylation site" description="N-linked (GlcNAc...) asparagine" evidence="2">
    <location>
        <position position="261"/>
    </location>
</feature>
<feature type="glycosylation site" description="N-linked (GlcNAc...) asparagine" evidence="2">
    <location>
        <position position="332"/>
    </location>
</feature>
<feature type="glycosylation site" description="N-linked (GlcNAc...) asparagine" evidence="2">
    <location>
        <position position="364"/>
    </location>
</feature>
<feature type="glycosylation site" description="N-linked (GlcNAc...) asparagine" evidence="2">
    <location>
        <position position="399"/>
    </location>
</feature>
<feature type="glycosylation site" description="N-linked (GlcNAc...) asparagine" evidence="2">
    <location>
        <position position="478"/>
    </location>
</feature>
<feature type="glycosylation site" description="N-linked (GlcNAc...) asparagine" evidence="2">
    <location>
        <position position="728"/>
    </location>
</feature>
<protein>
    <recommendedName>
        <fullName>Probable beta-glucosidase F</fullName>
        <ecNumber>3.2.1.21</ecNumber>
    </recommendedName>
    <alternativeName>
        <fullName>Beta-D-glucoside glucohydrolase F</fullName>
    </alternativeName>
    <alternativeName>
        <fullName>Cellobiase F</fullName>
    </alternativeName>
    <alternativeName>
        <fullName>Gentiobiase F</fullName>
    </alternativeName>
</protein>
<accession>Q4WMU3</accession>